<organism>
    <name type="scientific">Lactobacillus johnsonii (strain CNCM I-12250 / La1 / NCC 533)</name>
    <dbReference type="NCBI Taxonomy" id="257314"/>
    <lineage>
        <taxon>Bacteria</taxon>
        <taxon>Bacillati</taxon>
        <taxon>Bacillota</taxon>
        <taxon>Bacilli</taxon>
        <taxon>Lactobacillales</taxon>
        <taxon>Lactobacillaceae</taxon>
        <taxon>Lactobacillus</taxon>
    </lineage>
</organism>
<protein>
    <recommendedName>
        <fullName evidence="1">ATP-dependent helicase/deoxyribonuclease subunit B</fullName>
        <ecNumber evidence="1">3.1.-.-</ecNumber>
    </recommendedName>
    <alternativeName>
        <fullName evidence="1">ATP-dependent helicase/nuclease subunit RexB</fullName>
    </alternativeName>
</protein>
<reference key="1">
    <citation type="journal article" date="2004" name="Proc. Natl. Acad. Sci. U.S.A.">
        <title>The genome sequence of the probiotic intestinal bacterium Lactobacillus johnsonii NCC 533.</title>
        <authorList>
            <person name="Pridmore R.D."/>
            <person name="Berger B."/>
            <person name="Desiere F."/>
            <person name="Vilanova D."/>
            <person name="Barretto C."/>
            <person name="Pittet A.-C."/>
            <person name="Zwahlen M.-C."/>
            <person name="Rouvet M."/>
            <person name="Altermann E."/>
            <person name="Barrangou R."/>
            <person name="Mollet B."/>
            <person name="Mercenier A."/>
            <person name="Klaenhammer T."/>
            <person name="Arigoni F."/>
            <person name="Schell M.A."/>
        </authorList>
    </citation>
    <scope>NUCLEOTIDE SEQUENCE [LARGE SCALE GENOMIC DNA]</scope>
    <source>
        <strain>CNCM I-1225 / La1 / NCC 533</strain>
    </source>
</reference>
<dbReference type="EC" id="3.1.-.-" evidence="1"/>
<dbReference type="EMBL" id="AE017198">
    <property type="protein sequence ID" value="AAS09025.1"/>
    <property type="molecule type" value="Genomic_DNA"/>
</dbReference>
<dbReference type="RefSeq" id="WP_011162033.1">
    <property type="nucleotide sequence ID" value="NC_005362.1"/>
</dbReference>
<dbReference type="SMR" id="Q74JA5"/>
<dbReference type="KEGG" id="ljo:LJ_1204"/>
<dbReference type="PATRIC" id="fig|257314.6.peg.1070"/>
<dbReference type="eggNOG" id="COG3857">
    <property type="taxonomic scope" value="Bacteria"/>
</dbReference>
<dbReference type="HOGENOM" id="CLU_007838_0_0_9"/>
<dbReference type="Proteomes" id="UP000000581">
    <property type="component" value="Chromosome"/>
</dbReference>
<dbReference type="GO" id="GO:0008409">
    <property type="term" value="F:5'-3' exonuclease activity"/>
    <property type="evidence" value="ECO:0007669"/>
    <property type="project" value="UniProtKB-UniRule"/>
</dbReference>
<dbReference type="GO" id="GO:0005524">
    <property type="term" value="F:ATP binding"/>
    <property type="evidence" value="ECO:0007669"/>
    <property type="project" value="UniProtKB-UniRule"/>
</dbReference>
<dbReference type="GO" id="GO:0003690">
    <property type="term" value="F:double-stranded DNA binding"/>
    <property type="evidence" value="ECO:0007669"/>
    <property type="project" value="UniProtKB-UniRule"/>
</dbReference>
<dbReference type="GO" id="GO:0004386">
    <property type="term" value="F:helicase activity"/>
    <property type="evidence" value="ECO:0007669"/>
    <property type="project" value="UniProtKB-KW"/>
</dbReference>
<dbReference type="GO" id="GO:0016817">
    <property type="term" value="F:hydrolase activity, acting on acid anhydrides"/>
    <property type="evidence" value="ECO:0007669"/>
    <property type="project" value="InterPro"/>
</dbReference>
<dbReference type="GO" id="GO:0000724">
    <property type="term" value="P:double-strand break repair via homologous recombination"/>
    <property type="evidence" value="ECO:0007669"/>
    <property type="project" value="UniProtKB-UniRule"/>
</dbReference>
<dbReference type="Gene3D" id="3.40.50.300">
    <property type="entry name" value="P-loop containing nucleotide triphosphate hydrolases"/>
    <property type="match status" value="3"/>
</dbReference>
<dbReference type="HAMAP" id="MF_01453">
    <property type="entry name" value="AddB_type2"/>
    <property type="match status" value="1"/>
</dbReference>
<dbReference type="InterPro" id="IPR049035">
    <property type="entry name" value="ADDB_N"/>
</dbReference>
<dbReference type="InterPro" id="IPR014141">
    <property type="entry name" value="DNA_helicase_suRexB"/>
</dbReference>
<dbReference type="InterPro" id="IPR027417">
    <property type="entry name" value="P-loop_NTPase"/>
</dbReference>
<dbReference type="InterPro" id="IPR038726">
    <property type="entry name" value="PDDEXK_AddAB-type"/>
</dbReference>
<dbReference type="PANTHER" id="PTHR30591">
    <property type="entry name" value="RECBCD ENZYME SUBUNIT RECC"/>
    <property type="match status" value="1"/>
</dbReference>
<dbReference type="PANTHER" id="PTHR30591:SF1">
    <property type="entry name" value="RECBCD ENZYME SUBUNIT RECC"/>
    <property type="match status" value="1"/>
</dbReference>
<dbReference type="Pfam" id="PF21445">
    <property type="entry name" value="ADDB_N"/>
    <property type="match status" value="1"/>
</dbReference>
<dbReference type="Pfam" id="PF12705">
    <property type="entry name" value="PDDEXK_1"/>
    <property type="match status" value="1"/>
</dbReference>
<dbReference type="SUPFAM" id="SSF52540">
    <property type="entry name" value="P-loop containing nucleoside triphosphate hydrolases"/>
    <property type="match status" value="1"/>
</dbReference>
<evidence type="ECO:0000255" key="1">
    <source>
        <dbReference type="HAMAP-Rule" id="MF_01453"/>
    </source>
</evidence>
<proteinExistence type="inferred from homology"/>
<keyword id="KW-0067">ATP-binding</keyword>
<keyword id="KW-0227">DNA damage</keyword>
<keyword id="KW-0234">DNA repair</keyword>
<keyword id="KW-0238">DNA-binding</keyword>
<keyword id="KW-0269">Exonuclease</keyword>
<keyword id="KW-0347">Helicase</keyword>
<keyword id="KW-0378">Hydrolase</keyword>
<keyword id="KW-0540">Nuclease</keyword>
<keyword id="KW-0547">Nucleotide-binding</keyword>
<feature type="chain" id="PRO_0000379374" description="ATP-dependent helicase/deoxyribonuclease subunit B">
    <location>
        <begin position="1"/>
        <end position="1158"/>
    </location>
</feature>
<gene>
    <name evidence="1" type="primary">rexB</name>
    <name type="ordered locus">LJ_1204</name>
</gene>
<name>ADDB_LACJO</name>
<sequence>MINVITGRQVDNLQNEIIDQAVKSYYQDKRHDVFIIVPNHIKFTTEVRALSKLSVLTNKKQVAVNKLHILSFSRLAWYFLRDEAIKLPQILDDAASVMLLEQIVKDHQDELKLFQNQTQVTSGALRQMYEAILSVRAGNIELDNIDEKKLNEETSYKIHDLRIIYDEFIERLSEKFATKDEMQLLLNQFLAKSNNLSTMEFYFSDFSHFSLQELTSVRLISKKAKNTTLAFKTKIGKIDNNAEPGDYDYVVQRTIGQLEHFWQNQQLDYQTQEYPLTQTSPSSLLNGVWTKTSGFDERLSKFLQPVKADSRYAEAYFVARTIYQQVALNNYRYQDFLVLAPNLSEYETYLTPILRQNQIPFFNDLQREMKYHPLVVAVENLQQIFKRGFQTDNVIALMKTQLFIPDWYKNSARYQNDVDLLENFVLAHGIKGKLWTKSLKSFVDADVIALDKSEKEVEDLDRLRDYFIDALTKFFEQLDKEEDPQAGVTVFWNFLIKNRVAKRLESWRKEANDTGDLQLAQQPEQVWSTLTDLLKDYLLVANKFSVDQFFDLLISGFSEANFSQIPSTLDAVNISELGMVQGQGYKQVFIIGATSTNLPQIEKIPGFFSSENLEQLNEGNEANGYLEDQQKINNLDQNYQFGNALSLASDKIYISYPVINTANEQLEPSIFYKQLLKLTRADEFAQHDLPQNNGEVLTFITNPEASLGYLTYLKNKAATDVDSLLKMTEEKIGEVAKNVLEGSSFKNIPQDLSPELAQQLYGDRIETSVSQLETYYQNSFEYFLNYGLHLKKRFENELDVIQAGNYYHETFDYLVKRIKEKKLNFADLTEEKLGELLIEVREELKEKGRYRQLLNDPFNKYLFHKLDQTTANVAHYWHSNVNKTTFRPQYSELSFGKNQKVSGLSYSWKDDNNKKKIVDLRGKMDRVDLAQVNDRVLGEVIDYKSSAKKFDLGLFANGISMQMISYLEVLKNNNKFFAQGKDLDVLGAFYQNITSSLERLSSEKMILSNYQIKDLAKESTKKLMYNGILIADEEMLDLIEPGMEKDRAVSDLYTSVKRKVNGYISWPQNQSFTPDQLDLLLAYNSYLIKNAGNEILSGKIELDPYSYGQQTSLTYSDFKDIFFFDAMLKENNYHKIKSIDKKTLLTLIREKLDLDGEE</sequence>
<comment type="function">
    <text evidence="1">The heterodimer acts as both an ATP-dependent DNA helicase and an ATP-dependent, dual-direction single-stranded exonuclease. Recognizes the chi site generating a DNA molecule suitable for the initiation of homologous recombination. This subunit has 5' -&gt; 3' nuclease activity but not helicase activity.</text>
</comment>
<comment type="cofactor">
    <cofactor evidence="1">
        <name>Mg(2+)</name>
        <dbReference type="ChEBI" id="CHEBI:18420"/>
    </cofactor>
</comment>
<comment type="subunit">
    <text evidence="1">Heterodimer of AddA and RexB.</text>
</comment>
<comment type="miscellaneous">
    <text evidence="1">Despite having helicase-like domains, this subunit does not have helicase activity.</text>
</comment>
<comment type="similarity">
    <text evidence="1">Belongs to the helicase family. AddB/RexB type 2 subfamily.</text>
</comment>
<accession>Q74JA5</accession>